<sequence length="383" mass="40867">MRAYCVTSESVTEGHPDKVCDQISDGILDACLAQDPAARVAVETLVSGNTVFIAGEITTTARLDAVRTAREVIEDIGYADPALGFDSGSCFILTNLRTQSPDIDLGVSRGAELGAGDQGVLYGYACDETASLMPAPIHMAHGLSLRLAAARHGGVLPWLRPDGKTQVTVRYDGEGRPEALTSVIVSTQHDEGVDRETLVRGIIEAVIYPEVGGWLKPETRVLINPTGRFVIGGPAGDTGVTGRKLMVDTYGGCARHGGGAFSGKDSTKVDRTAAYMARYAAKNVVAAGLARRCEVALAYAIGERLPEMVSVETFGTETIDVDRLTAAVRETFPFSVSGMIAALDLRRPIFRKTAAYGHFGRENKGFQWEKTDRVDALRAVCGL</sequence>
<proteinExistence type="inferred from homology"/>
<accession>Q2RVX7</accession>
<feature type="chain" id="PRO_0000241030" description="S-adenosylmethionine synthase 1">
    <location>
        <begin position="1"/>
        <end position="383"/>
    </location>
</feature>
<feature type="region of interest" description="Flexible loop" evidence="1">
    <location>
        <begin position="99"/>
        <end position="109"/>
    </location>
</feature>
<feature type="binding site" description="in other chain" evidence="1">
    <location>
        <position position="15"/>
    </location>
    <ligand>
        <name>ATP</name>
        <dbReference type="ChEBI" id="CHEBI:30616"/>
        <note>ligand shared between two neighboring subunits</note>
    </ligand>
</feature>
<feature type="binding site" evidence="1">
    <location>
        <position position="17"/>
    </location>
    <ligand>
        <name>Mg(2+)</name>
        <dbReference type="ChEBI" id="CHEBI:18420"/>
    </ligand>
</feature>
<feature type="binding site" evidence="1">
    <location>
        <position position="43"/>
    </location>
    <ligand>
        <name>K(+)</name>
        <dbReference type="ChEBI" id="CHEBI:29103"/>
    </ligand>
</feature>
<feature type="binding site" description="in other chain" evidence="1">
    <location>
        <position position="56"/>
    </location>
    <ligand>
        <name>L-methionine</name>
        <dbReference type="ChEBI" id="CHEBI:57844"/>
        <note>ligand shared between two neighboring subunits</note>
    </ligand>
</feature>
<feature type="binding site" description="in other chain" evidence="1">
    <location>
        <position position="99"/>
    </location>
    <ligand>
        <name>L-methionine</name>
        <dbReference type="ChEBI" id="CHEBI:57844"/>
        <note>ligand shared between two neighboring subunits</note>
    </ligand>
</feature>
<feature type="binding site" description="in other chain" evidence="1">
    <location>
        <begin position="162"/>
        <end position="164"/>
    </location>
    <ligand>
        <name>ATP</name>
        <dbReference type="ChEBI" id="CHEBI:30616"/>
        <note>ligand shared between two neighboring subunits</note>
    </ligand>
</feature>
<feature type="binding site" description="in other chain" evidence="1">
    <location>
        <begin position="228"/>
        <end position="229"/>
    </location>
    <ligand>
        <name>ATP</name>
        <dbReference type="ChEBI" id="CHEBI:30616"/>
        <note>ligand shared between two neighboring subunits</note>
    </ligand>
</feature>
<feature type="binding site" evidence="1">
    <location>
        <position position="237"/>
    </location>
    <ligand>
        <name>ATP</name>
        <dbReference type="ChEBI" id="CHEBI:30616"/>
        <note>ligand shared between two neighboring subunits</note>
    </ligand>
</feature>
<feature type="binding site" evidence="1">
    <location>
        <position position="237"/>
    </location>
    <ligand>
        <name>L-methionine</name>
        <dbReference type="ChEBI" id="CHEBI:57844"/>
        <note>ligand shared between two neighboring subunits</note>
    </ligand>
</feature>
<feature type="binding site" description="in other chain" evidence="1">
    <location>
        <begin position="243"/>
        <end position="244"/>
    </location>
    <ligand>
        <name>ATP</name>
        <dbReference type="ChEBI" id="CHEBI:30616"/>
        <note>ligand shared between two neighboring subunits</note>
    </ligand>
</feature>
<feature type="binding site" evidence="1">
    <location>
        <position position="260"/>
    </location>
    <ligand>
        <name>ATP</name>
        <dbReference type="ChEBI" id="CHEBI:30616"/>
        <note>ligand shared between two neighboring subunits</note>
    </ligand>
</feature>
<feature type="binding site" evidence="1">
    <location>
        <position position="264"/>
    </location>
    <ligand>
        <name>ATP</name>
        <dbReference type="ChEBI" id="CHEBI:30616"/>
        <note>ligand shared between two neighboring subunits</note>
    </ligand>
</feature>
<feature type="binding site" description="in other chain" evidence="1">
    <location>
        <position position="268"/>
    </location>
    <ligand>
        <name>L-methionine</name>
        <dbReference type="ChEBI" id="CHEBI:57844"/>
        <note>ligand shared between two neighboring subunits</note>
    </ligand>
</feature>
<reference key="1">
    <citation type="journal article" date="2011" name="Stand. Genomic Sci.">
        <title>Complete genome sequence of Rhodospirillum rubrum type strain (S1).</title>
        <authorList>
            <person name="Munk A.C."/>
            <person name="Copeland A."/>
            <person name="Lucas S."/>
            <person name="Lapidus A."/>
            <person name="Del Rio T.G."/>
            <person name="Barry K."/>
            <person name="Detter J.C."/>
            <person name="Hammon N."/>
            <person name="Israni S."/>
            <person name="Pitluck S."/>
            <person name="Brettin T."/>
            <person name="Bruce D."/>
            <person name="Han C."/>
            <person name="Tapia R."/>
            <person name="Gilna P."/>
            <person name="Schmutz J."/>
            <person name="Larimer F."/>
            <person name="Land M."/>
            <person name="Kyrpides N.C."/>
            <person name="Mavromatis K."/>
            <person name="Richardson P."/>
            <person name="Rohde M."/>
            <person name="Goeker M."/>
            <person name="Klenk H.P."/>
            <person name="Zhang Y."/>
            <person name="Roberts G.P."/>
            <person name="Reslewic S."/>
            <person name="Schwartz D.C."/>
        </authorList>
    </citation>
    <scope>NUCLEOTIDE SEQUENCE [LARGE SCALE GENOMIC DNA]</scope>
    <source>
        <strain>ATCC 11170 / ATH 1.1.1 / DSM 467 / LMG 4362 / NCIMB 8255 / S1</strain>
    </source>
</reference>
<dbReference type="EC" id="2.5.1.6" evidence="1"/>
<dbReference type="EMBL" id="CP000230">
    <property type="protein sequence ID" value="ABC21718.1"/>
    <property type="molecule type" value="Genomic_DNA"/>
</dbReference>
<dbReference type="RefSeq" id="YP_426005.1">
    <property type="nucleotide sequence ID" value="NC_007643.1"/>
</dbReference>
<dbReference type="SMR" id="Q2RVX7"/>
<dbReference type="STRING" id="269796.Rru_A0917"/>
<dbReference type="EnsemblBacteria" id="ABC21718">
    <property type="protein sequence ID" value="ABC21718"/>
    <property type="gene ID" value="Rru_A0917"/>
</dbReference>
<dbReference type="KEGG" id="rru:Rru_A0917"/>
<dbReference type="PATRIC" id="fig|269796.9.peg.973"/>
<dbReference type="eggNOG" id="COG0192">
    <property type="taxonomic scope" value="Bacteria"/>
</dbReference>
<dbReference type="HOGENOM" id="CLU_041802_1_1_5"/>
<dbReference type="PhylomeDB" id="Q2RVX7"/>
<dbReference type="UniPathway" id="UPA00315">
    <property type="reaction ID" value="UER00080"/>
</dbReference>
<dbReference type="Proteomes" id="UP000001929">
    <property type="component" value="Chromosome"/>
</dbReference>
<dbReference type="GO" id="GO:0005737">
    <property type="term" value="C:cytoplasm"/>
    <property type="evidence" value="ECO:0007669"/>
    <property type="project" value="UniProtKB-SubCell"/>
</dbReference>
<dbReference type="GO" id="GO:0005524">
    <property type="term" value="F:ATP binding"/>
    <property type="evidence" value="ECO:0007669"/>
    <property type="project" value="UniProtKB-UniRule"/>
</dbReference>
<dbReference type="GO" id="GO:0000287">
    <property type="term" value="F:magnesium ion binding"/>
    <property type="evidence" value="ECO:0007669"/>
    <property type="project" value="UniProtKB-UniRule"/>
</dbReference>
<dbReference type="GO" id="GO:0004478">
    <property type="term" value="F:methionine adenosyltransferase activity"/>
    <property type="evidence" value="ECO:0007669"/>
    <property type="project" value="UniProtKB-UniRule"/>
</dbReference>
<dbReference type="GO" id="GO:0006730">
    <property type="term" value="P:one-carbon metabolic process"/>
    <property type="evidence" value="ECO:0007669"/>
    <property type="project" value="UniProtKB-KW"/>
</dbReference>
<dbReference type="GO" id="GO:0006556">
    <property type="term" value="P:S-adenosylmethionine biosynthetic process"/>
    <property type="evidence" value="ECO:0007669"/>
    <property type="project" value="UniProtKB-UniRule"/>
</dbReference>
<dbReference type="CDD" id="cd18079">
    <property type="entry name" value="S-AdoMet_synt"/>
    <property type="match status" value="1"/>
</dbReference>
<dbReference type="FunFam" id="3.30.300.10:FF:000003">
    <property type="entry name" value="S-adenosylmethionine synthase"/>
    <property type="match status" value="1"/>
</dbReference>
<dbReference type="Gene3D" id="3.30.300.10">
    <property type="match status" value="3"/>
</dbReference>
<dbReference type="HAMAP" id="MF_00086">
    <property type="entry name" value="S_AdoMet_synth1"/>
    <property type="match status" value="1"/>
</dbReference>
<dbReference type="InterPro" id="IPR022631">
    <property type="entry name" value="ADOMET_SYNTHASE_CS"/>
</dbReference>
<dbReference type="InterPro" id="IPR022630">
    <property type="entry name" value="S-AdoMet_synt_C"/>
</dbReference>
<dbReference type="InterPro" id="IPR022629">
    <property type="entry name" value="S-AdoMet_synt_central"/>
</dbReference>
<dbReference type="InterPro" id="IPR022628">
    <property type="entry name" value="S-AdoMet_synt_N"/>
</dbReference>
<dbReference type="InterPro" id="IPR002133">
    <property type="entry name" value="S-AdoMet_synthetase"/>
</dbReference>
<dbReference type="InterPro" id="IPR022636">
    <property type="entry name" value="S-AdoMet_synthetase_sfam"/>
</dbReference>
<dbReference type="NCBIfam" id="TIGR01034">
    <property type="entry name" value="metK"/>
    <property type="match status" value="1"/>
</dbReference>
<dbReference type="PANTHER" id="PTHR11964">
    <property type="entry name" value="S-ADENOSYLMETHIONINE SYNTHETASE"/>
    <property type="match status" value="1"/>
</dbReference>
<dbReference type="Pfam" id="PF02773">
    <property type="entry name" value="S-AdoMet_synt_C"/>
    <property type="match status" value="1"/>
</dbReference>
<dbReference type="Pfam" id="PF02772">
    <property type="entry name" value="S-AdoMet_synt_M"/>
    <property type="match status" value="1"/>
</dbReference>
<dbReference type="Pfam" id="PF00438">
    <property type="entry name" value="S-AdoMet_synt_N"/>
    <property type="match status" value="1"/>
</dbReference>
<dbReference type="PIRSF" id="PIRSF000497">
    <property type="entry name" value="MAT"/>
    <property type="match status" value="1"/>
</dbReference>
<dbReference type="SUPFAM" id="SSF55973">
    <property type="entry name" value="S-adenosylmethionine synthetase"/>
    <property type="match status" value="3"/>
</dbReference>
<dbReference type="PROSITE" id="PS00376">
    <property type="entry name" value="ADOMET_SYNTHASE_1"/>
    <property type="match status" value="1"/>
</dbReference>
<dbReference type="PROSITE" id="PS00377">
    <property type="entry name" value="ADOMET_SYNTHASE_2"/>
    <property type="match status" value="1"/>
</dbReference>
<protein>
    <recommendedName>
        <fullName evidence="1">S-adenosylmethionine synthase 1</fullName>
        <shortName evidence="1">AdoMet synthase 1</shortName>
        <ecNumber evidence="1">2.5.1.6</ecNumber>
    </recommendedName>
    <alternativeName>
        <fullName evidence="1">MAT 1</fullName>
    </alternativeName>
    <alternativeName>
        <fullName evidence="1">Methionine adenosyltransferase 1</fullName>
    </alternativeName>
</protein>
<comment type="function">
    <text evidence="1">Catalyzes the formation of S-adenosylmethionine (AdoMet) from methionine and ATP. The overall synthetic reaction is composed of two sequential steps, AdoMet formation and the subsequent tripolyphosphate hydrolysis which occurs prior to release of AdoMet from the enzyme.</text>
</comment>
<comment type="catalytic activity">
    <reaction evidence="1">
        <text>L-methionine + ATP + H2O = S-adenosyl-L-methionine + phosphate + diphosphate</text>
        <dbReference type="Rhea" id="RHEA:21080"/>
        <dbReference type="ChEBI" id="CHEBI:15377"/>
        <dbReference type="ChEBI" id="CHEBI:30616"/>
        <dbReference type="ChEBI" id="CHEBI:33019"/>
        <dbReference type="ChEBI" id="CHEBI:43474"/>
        <dbReference type="ChEBI" id="CHEBI:57844"/>
        <dbReference type="ChEBI" id="CHEBI:59789"/>
        <dbReference type="EC" id="2.5.1.6"/>
    </reaction>
</comment>
<comment type="cofactor">
    <cofactor evidence="1">
        <name>Mg(2+)</name>
        <dbReference type="ChEBI" id="CHEBI:18420"/>
    </cofactor>
    <text evidence="1">Binds 2 divalent ions per subunit.</text>
</comment>
<comment type="cofactor">
    <cofactor evidence="1">
        <name>K(+)</name>
        <dbReference type="ChEBI" id="CHEBI:29103"/>
    </cofactor>
    <text evidence="1">Binds 1 potassium ion per subunit.</text>
</comment>
<comment type="pathway">
    <text evidence="1">Amino-acid biosynthesis; S-adenosyl-L-methionine biosynthesis; S-adenosyl-L-methionine from L-methionine: step 1/1.</text>
</comment>
<comment type="subunit">
    <text evidence="1">Homotetramer; dimer of dimers.</text>
</comment>
<comment type="subcellular location">
    <subcellularLocation>
        <location evidence="1">Cytoplasm</location>
    </subcellularLocation>
</comment>
<comment type="similarity">
    <text evidence="1">Belongs to the AdoMet synthase family.</text>
</comment>
<organism>
    <name type="scientific">Rhodospirillum rubrum (strain ATCC 11170 / ATH 1.1.1 / DSM 467 / LMG 4362 / NCIMB 8255 / S1)</name>
    <dbReference type="NCBI Taxonomy" id="269796"/>
    <lineage>
        <taxon>Bacteria</taxon>
        <taxon>Pseudomonadati</taxon>
        <taxon>Pseudomonadota</taxon>
        <taxon>Alphaproteobacteria</taxon>
        <taxon>Rhodospirillales</taxon>
        <taxon>Rhodospirillaceae</taxon>
        <taxon>Rhodospirillum</taxon>
    </lineage>
</organism>
<gene>
    <name evidence="1" type="primary">metK1</name>
    <name type="ordered locus">Rru_A0917</name>
</gene>
<name>METK1_RHORT</name>
<keyword id="KW-0067">ATP-binding</keyword>
<keyword id="KW-0963">Cytoplasm</keyword>
<keyword id="KW-0460">Magnesium</keyword>
<keyword id="KW-0479">Metal-binding</keyword>
<keyword id="KW-0547">Nucleotide-binding</keyword>
<keyword id="KW-0554">One-carbon metabolism</keyword>
<keyword id="KW-0630">Potassium</keyword>
<keyword id="KW-1185">Reference proteome</keyword>
<keyword id="KW-0808">Transferase</keyword>
<evidence type="ECO:0000255" key="1">
    <source>
        <dbReference type="HAMAP-Rule" id="MF_00086"/>
    </source>
</evidence>